<protein>
    <recommendedName>
        <fullName evidence="1">Glutamate-1-semialdehyde 2,1-aminomutase</fullName>
        <shortName evidence="1">GSA</shortName>
        <ecNumber evidence="1">5.4.3.8</ecNumber>
    </recommendedName>
    <alternativeName>
        <fullName evidence="1">Glutamate-1-semialdehyde aminotransferase</fullName>
        <shortName evidence="1">GSA-AT</shortName>
    </alternativeName>
</protein>
<dbReference type="EC" id="5.4.3.8" evidence="1"/>
<dbReference type="EMBL" id="CP000479">
    <property type="protein sequence ID" value="ABK67932.1"/>
    <property type="molecule type" value="Genomic_DNA"/>
</dbReference>
<dbReference type="RefSeq" id="WP_009979274.1">
    <property type="nucleotide sequence ID" value="NC_008595.1"/>
</dbReference>
<dbReference type="SMR" id="A0QLG2"/>
<dbReference type="KEGG" id="mav:MAV_4621"/>
<dbReference type="HOGENOM" id="CLU_016922_1_5_11"/>
<dbReference type="UniPathway" id="UPA00251">
    <property type="reaction ID" value="UER00317"/>
</dbReference>
<dbReference type="Proteomes" id="UP000001574">
    <property type="component" value="Chromosome"/>
</dbReference>
<dbReference type="GO" id="GO:0005737">
    <property type="term" value="C:cytoplasm"/>
    <property type="evidence" value="ECO:0007669"/>
    <property type="project" value="UniProtKB-SubCell"/>
</dbReference>
<dbReference type="GO" id="GO:0042286">
    <property type="term" value="F:glutamate-1-semialdehyde 2,1-aminomutase activity"/>
    <property type="evidence" value="ECO:0007669"/>
    <property type="project" value="UniProtKB-UniRule"/>
</dbReference>
<dbReference type="GO" id="GO:0030170">
    <property type="term" value="F:pyridoxal phosphate binding"/>
    <property type="evidence" value="ECO:0007669"/>
    <property type="project" value="InterPro"/>
</dbReference>
<dbReference type="GO" id="GO:0008483">
    <property type="term" value="F:transaminase activity"/>
    <property type="evidence" value="ECO:0007669"/>
    <property type="project" value="InterPro"/>
</dbReference>
<dbReference type="GO" id="GO:0006782">
    <property type="term" value="P:protoporphyrinogen IX biosynthetic process"/>
    <property type="evidence" value="ECO:0007669"/>
    <property type="project" value="UniProtKB-UniRule"/>
</dbReference>
<dbReference type="CDD" id="cd00610">
    <property type="entry name" value="OAT_like"/>
    <property type="match status" value="1"/>
</dbReference>
<dbReference type="FunFam" id="3.40.640.10:FF:000021">
    <property type="entry name" value="Glutamate-1-semialdehyde 2,1-aminomutase"/>
    <property type="match status" value="1"/>
</dbReference>
<dbReference type="Gene3D" id="3.90.1150.10">
    <property type="entry name" value="Aspartate Aminotransferase, domain 1"/>
    <property type="match status" value="1"/>
</dbReference>
<dbReference type="Gene3D" id="3.40.640.10">
    <property type="entry name" value="Type I PLP-dependent aspartate aminotransferase-like (Major domain)"/>
    <property type="match status" value="1"/>
</dbReference>
<dbReference type="HAMAP" id="MF_00375">
    <property type="entry name" value="HemL_aminotrans_3"/>
    <property type="match status" value="1"/>
</dbReference>
<dbReference type="InterPro" id="IPR004639">
    <property type="entry name" value="4pyrrol_synth_GluAld_NH2Trfase"/>
</dbReference>
<dbReference type="InterPro" id="IPR005814">
    <property type="entry name" value="Aminotrans_3"/>
</dbReference>
<dbReference type="InterPro" id="IPR049704">
    <property type="entry name" value="Aminotrans_3_PPA_site"/>
</dbReference>
<dbReference type="InterPro" id="IPR015424">
    <property type="entry name" value="PyrdxlP-dep_Trfase"/>
</dbReference>
<dbReference type="InterPro" id="IPR015421">
    <property type="entry name" value="PyrdxlP-dep_Trfase_major"/>
</dbReference>
<dbReference type="InterPro" id="IPR015422">
    <property type="entry name" value="PyrdxlP-dep_Trfase_small"/>
</dbReference>
<dbReference type="NCBIfam" id="TIGR00713">
    <property type="entry name" value="hemL"/>
    <property type="match status" value="1"/>
</dbReference>
<dbReference type="NCBIfam" id="NF000818">
    <property type="entry name" value="PRK00062.1"/>
    <property type="match status" value="1"/>
</dbReference>
<dbReference type="PANTHER" id="PTHR43713">
    <property type="entry name" value="GLUTAMATE-1-SEMIALDEHYDE 2,1-AMINOMUTASE"/>
    <property type="match status" value="1"/>
</dbReference>
<dbReference type="PANTHER" id="PTHR43713:SF3">
    <property type="entry name" value="GLUTAMATE-1-SEMIALDEHYDE 2,1-AMINOMUTASE 1, CHLOROPLASTIC-RELATED"/>
    <property type="match status" value="1"/>
</dbReference>
<dbReference type="Pfam" id="PF00202">
    <property type="entry name" value="Aminotran_3"/>
    <property type="match status" value="1"/>
</dbReference>
<dbReference type="SUPFAM" id="SSF53383">
    <property type="entry name" value="PLP-dependent transferases"/>
    <property type="match status" value="1"/>
</dbReference>
<dbReference type="PROSITE" id="PS00600">
    <property type="entry name" value="AA_TRANSFER_CLASS_3"/>
    <property type="match status" value="1"/>
</dbReference>
<gene>
    <name evidence="1" type="primary">hemL</name>
    <name type="ordered locus">MAV_4621</name>
</gene>
<organism>
    <name type="scientific">Mycobacterium avium (strain 104)</name>
    <dbReference type="NCBI Taxonomy" id="243243"/>
    <lineage>
        <taxon>Bacteria</taxon>
        <taxon>Bacillati</taxon>
        <taxon>Actinomycetota</taxon>
        <taxon>Actinomycetes</taxon>
        <taxon>Mycobacteriales</taxon>
        <taxon>Mycobacteriaceae</taxon>
        <taxon>Mycobacterium</taxon>
        <taxon>Mycobacterium avium complex (MAC)</taxon>
    </lineage>
</organism>
<keyword id="KW-0963">Cytoplasm</keyword>
<keyword id="KW-0413">Isomerase</keyword>
<keyword id="KW-0627">Porphyrin biosynthesis</keyword>
<keyword id="KW-0663">Pyridoxal phosphate</keyword>
<sequence>MGSSDQATAHARAQAASARLFDDACAVIPGGVNSPVRAFTAVGGTPPFITAARGCRLTDADGNHYVDLVCSWGPMILGHAHPAVVEAVAKAAASGLSFGAPTPAESELAAEMIARVAPVERIRLVNSGTEATMSAVRLARGFTGRAKIVKFSGCYHGHVDALLADAGSGVATLGLPSSPGVTGATAADTIVLPYNDIDAVRQAFAEFGDQIAAVITEASPGNMGVVPPAPGFNAALRALTAEHGALLIVDEVMTGFRVSRSGWYGIDPVDADLFTFGKVMSGGLPAAAFGGRAEVMERLAPLGPVYQAGTLSGNPVAVAAGLATLRHADAAAYAALDANADRLARLLSDALTNAGVPHQIPRAGNMLSVFFTDTPVTDFASARATQTWRYPPFFHALLDAGVYPPCSAFETWFVSTALDDDAFDRIAAALPAAARAAAGADEGNS</sequence>
<proteinExistence type="inferred from homology"/>
<accession>A0QLG2</accession>
<evidence type="ECO:0000255" key="1">
    <source>
        <dbReference type="HAMAP-Rule" id="MF_00375"/>
    </source>
</evidence>
<comment type="catalytic activity">
    <reaction evidence="1">
        <text>(S)-4-amino-5-oxopentanoate = 5-aminolevulinate</text>
        <dbReference type="Rhea" id="RHEA:14265"/>
        <dbReference type="ChEBI" id="CHEBI:57501"/>
        <dbReference type="ChEBI" id="CHEBI:356416"/>
        <dbReference type="EC" id="5.4.3.8"/>
    </reaction>
</comment>
<comment type="cofactor">
    <cofactor evidence="1">
        <name>pyridoxal 5'-phosphate</name>
        <dbReference type="ChEBI" id="CHEBI:597326"/>
    </cofactor>
</comment>
<comment type="pathway">
    <text evidence="1">Porphyrin-containing compound metabolism; protoporphyrin-IX biosynthesis; 5-aminolevulinate from L-glutamyl-tRNA(Glu): step 2/2.</text>
</comment>
<comment type="subunit">
    <text evidence="1">Homodimer.</text>
</comment>
<comment type="subcellular location">
    <subcellularLocation>
        <location evidence="1">Cytoplasm</location>
    </subcellularLocation>
</comment>
<comment type="similarity">
    <text evidence="1">Belongs to the class-III pyridoxal-phosphate-dependent aminotransferase family. HemL subfamily.</text>
</comment>
<feature type="chain" id="PRO_0000300924" description="Glutamate-1-semialdehyde 2,1-aminomutase">
    <location>
        <begin position="1"/>
        <end position="445"/>
    </location>
</feature>
<feature type="modified residue" description="N6-(pyridoxal phosphate)lysine" evidence="1">
    <location>
        <position position="278"/>
    </location>
</feature>
<reference key="1">
    <citation type="submission" date="2006-10" db="EMBL/GenBank/DDBJ databases">
        <authorList>
            <person name="Fleischmann R.D."/>
            <person name="Dodson R.J."/>
            <person name="Haft D.H."/>
            <person name="Merkel J.S."/>
            <person name="Nelson W.C."/>
            <person name="Fraser C.M."/>
        </authorList>
    </citation>
    <scope>NUCLEOTIDE SEQUENCE [LARGE SCALE GENOMIC DNA]</scope>
    <source>
        <strain>104</strain>
    </source>
</reference>
<name>GSA_MYCA1</name>